<feature type="chain" id="PRO_0000120528" description="Diaminobutyrate--2-oxoglutarate transaminase">
    <location>
        <begin position="1"/>
        <end position="420"/>
    </location>
</feature>
<feature type="modified residue" description="N6-(pyridoxal phosphate)lysine" evidence="2">
    <location>
        <position position="271"/>
    </location>
</feature>
<gene>
    <name type="primary">ectB</name>
    <name type="synonym">thpB</name>
</gene>
<reference key="1">
    <citation type="journal article" date="2004" name="Appl. Environ. Microbiol.">
        <title>Functional expression of the ectoine hydroxylase gene (thpD) from Streptomyces chrysomallus in Halomonas elongata.</title>
        <authorList>
            <person name="Prabhu J."/>
            <person name="Schauwecker F."/>
            <person name="Grammel N."/>
            <person name="Keller U."/>
            <person name="Bernhard M."/>
        </authorList>
    </citation>
    <scope>NUCLEOTIDE SEQUENCE [GENOMIC DNA]</scope>
    <source>
        <strain>ATCC 11523 / DSM 40128 / JCM 4296 / LMG 20459 / NBRC 15393</strain>
    </source>
</reference>
<name>ECTB_STRAQ</name>
<comment type="function">
    <text evidence="1">Catalyzes reversively the conversion of L-aspartate beta-semialdehyde (ASA) to L-2,4-diaminobutyrate (DABA) by transamination with L-glutamate.</text>
</comment>
<comment type="catalytic activity">
    <reaction>
        <text>L-2,4-diaminobutanoate + 2-oxoglutarate = L-aspartate 4-semialdehyde + L-glutamate</text>
        <dbReference type="Rhea" id="RHEA:11160"/>
        <dbReference type="ChEBI" id="CHEBI:16810"/>
        <dbReference type="ChEBI" id="CHEBI:29985"/>
        <dbReference type="ChEBI" id="CHEBI:58761"/>
        <dbReference type="ChEBI" id="CHEBI:537519"/>
        <dbReference type="EC" id="2.6.1.76"/>
    </reaction>
</comment>
<comment type="cofactor">
    <cofactor evidence="1">
        <name>pyridoxal 5'-phosphate</name>
        <dbReference type="ChEBI" id="CHEBI:597326"/>
    </cofactor>
</comment>
<comment type="pathway">
    <text>Amine and polyamine biosynthesis; ectoine biosynthesis; L-ectoine from L-aspartate 4-semialdehyde: step 1/3.</text>
</comment>
<comment type="similarity">
    <text evidence="3">Belongs to the class-III pyridoxal-phosphate-dependent aminotransferase family.</text>
</comment>
<sequence length="420" mass="45883">MTITPPALSVFETLESEVRSYCRGWPAVFDRAQGARLTDEDGHSYLDFFAGAGSLNYGHNNPVLKRALIDYIERDGITHGLDMATTAKRAFLETFQNVILRPRDLPYKVMFPGPTGTNAVESALKLARKVKGRESVVSFTNAFHGMSLGSLAVTGNAFKRAGAGIPLVHGTPMPFDNYFDGTVPDFLWFERLLEDQGSGLNKPAAVIVETVQGEGGINVARAEWLRALQELCLRQVMLLIVDDIQMGCGRTGGFFSFEEAGIVPDIVTLSKSISGYGLPMSLCLFKPELDIWEPGEHNGTFRGNNPAFVTAAAVLDAYWADGQMEKQTLARGEQVEQTLLAICAEEPTAQFRGRGLVWGMEFEDKARASAVCARAFELGLLLETSGPQSEVVKLLPPLTITPEELDEGLRTLARCVRETA</sequence>
<keyword id="KW-0032">Aminotransferase</keyword>
<keyword id="KW-0663">Pyridoxal phosphate</keyword>
<keyword id="KW-0808">Transferase</keyword>
<accession>Q6QUY9</accession>
<protein>
    <recommendedName>
        <fullName>Diaminobutyrate--2-oxoglutarate transaminase</fullName>
        <ecNumber>2.6.1.76</ecNumber>
    </recommendedName>
    <alternativeName>
        <fullName>DABA aminotransferase</fullName>
    </alternativeName>
    <alternativeName>
        <fullName>Diaminobutyrate--2-oxoglutarate aminotransferase</fullName>
    </alternativeName>
    <alternativeName>
        <fullName>L-2,4-diaminobutyric acid transaminase</fullName>
    </alternativeName>
</protein>
<organism>
    <name type="scientific">Streptomyces anulatus</name>
    <name type="common">Streptomyces chrysomallus</name>
    <dbReference type="NCBI Taxonomy" id="1892"/>
    <lineage>
        <taxon>Bacteria</taxon>
        <taxon>Bacillati</taxon>
        <taxon>Actinomycetota</taxon>
        <taxon>Actinomycetes</taxon>
        <taxon>Kitasatosporales</taxon>
        <taxon>Streptomycetaceae</taxon>
        <taxon>Streptomyces</taxon>
    </lineage>
</organism>
<evidence type="ECO:0000250" key="1"/>
<evidence type="ECO:0000255" key="2"/>
<evidence type="ECO:0000305" key="3"/>
<dbReference type="EC" id="2.6.1.76"/>
<dbReference type="EMBL" id="AY524544">
    <property type="protein sequence ID" value="AAS02095.1"/>
    <property type="molecule type" value="Genomic_DNA"/>
</dbReference>
<dbReference type="SMR" id="Q6QUY9"/>
<dbReference type="UniPathway" id="UPA00067">
    <property type="reaction ID" value="UER00121"/>
</dbReference>
<dbReference type="GO" id="GO:0045303">
    <property type="term" value="F:diaminobutyrate-2-oxoglutarate transaminase activity"/>
    <property type="evidence" value="ECO:0007669"/>
    <property type="project" value="UniProtKB-EC"/>
</dbReference>
<dbReference type="GO" id="GO:0047307">
    <property type="term" value="F:diaminobutyrate-pyruvate transaminase activity"/>
    <property type="evidence" value="ECO:0007669"/>
    <property type="project" value="InterPro"/>
</dbReference>
<dbReference type="GO" id="GO:0030170">
    <property type="term" value="F:pyridoxal phosphate binding"/>
    <property type="evidence" value="ECO:0007669"/>
    <property type="project" value="InterPro"/>
</dbReference>
<dbReference type="GO" id="GO:0019491">
    <property type="term" value="P:ectoine biosynthetic process"/>
    <property type="evidence" value="ECO:0007669"/>
    <property type="project" value="UniProtKB-UniPathway"/>
</dbReference>
<dbReference type="CDD" id="cd00610">
    <property type="entry name" value="OAT_like"/>
    <property type="match status" value="1"/>
</dbReference>
<dbReference type="Gene3D" id="3.90.1150.10">
    <property type="entry name" value="Aspartate Aminotransferase, domain 1"/>
    <property type="match status" value="1"/>
</dbReference>
<dbReference type="Gene3D" id="3.40.640.10">
    <property type="entry name" value="Type I PLP-dependent aspartate aminotransferase-like (Major domain)"/>
    <property type="match status" value="1"/>
</dbReference>
<dbReference type="InterPro" id="IPR005814">
    <property type="entry name" value="Aminotrans_3"/>
</dbReference>
<dbReference type="InterPro" id="IPR049704">
    <property type="entry name" value="Aminotrans_3_PPA_site"/>
</dbReference>
<dbReference type="InterPro" id="IPR004637">
    <property type="entry name" value="Dat"/>
</dbReference>
<dbReference type="InterPro" id="IPR012773">
    <property type="entry name" value="Ectoine_EctB"/>
</dbReference>
<dbReference type="InterPro" id="IPR015424">
    <property type="entry name" value="PyrdxlP-dep_Trfase"/>
</dbReference>
<dbReference type="InterPro" id="IPR015421">
    <property type="entry name" value="PyrdxlP-dep_Trfase_major"/>
</dbReference>
<dbReference type="InterPro" id="IPR015422">
    <property type="entry name" value="PyrdxlP-dep_Trfase_small"/>
</dbReference>
<dbReference type="NCBIfam" id="TIGR00709">
    <property type="entry name" value="dat"/>
    <property type="match status" value="1"/>
</dbReference>
<dbReference type="NCBIfam" id="TIGR02407">
    <property type="entry name" value="ectoine_ectB"/>
    <property type="match status" value="1"/>
</dbReference>
<dbReference type="NCBIfam" id="NF006733">
    <property type="entry name" value="PRK09264.1"/>
    <property type="match status" value="1"/>
</dbReference>
<dbReference type="PANTHER" id="PTHR43552">
    <property type="entry name" value="DIAMINOBUTYRATE--2-OXOGLUTARATE AMINOTRANSFERASE"/>
    <property type="match status" value="1"/>
</dbReference>
<dbReference type="PANTHER" id="PTHR43552:SF2">
    <property type="entry name" value="DIAMINOBUTYRATE--2-OXOGLUTARATE TRANSAMINASE"/>
    <property type="match status" value="1"/>
</dbReference>
<dbReference type="Pfam" id="PF00202">
    <property type="entry name" value="Aminotran_3"/>
    <property type="match status" value="1"/>
</dbReference>
<dbReference type="PIRSF" id="PIRSF000521">
    <property type="entry name" value="Transaminase_4ab_Lys_Orn"/>
    <property type="match status" value="1"/>
</dbReference>
<dbReference type="SUPFAM" id="SSF53383">
    <property type="entry name" value="PLP-dependent transferases"/>
    <property type="match status" value="1"/>
</dbReference>
<dbReference type="PROSITE" id="PS00600">
    <property type="entry name" value="AA_TRANSFER_CLASS_3"/>
    <property type="match status" value="1"/>
</dbReference>
<proteinExistence type="inferred from homology"/>